<reference key="1">
    <citation type="journal article" date="2005" name="Eur. J. Immunol.">
        <title>Variety of antimicrobial peptides in the Bombina maxima toad and evidence of their rapid diversification.</title>
        <authorList>
            <person name="Lee W.-H."/>
            <person name="Li Y."/>
            <person name="Lai R."/>
            <person name="Li S."/>
            <person name="Zhang Y."/>
            <person name="Wang W."/>
        </authorList>
    </citation>
    <scope>NUCLEOTIDE SEQUENCE [MRNA]</scope>
    <scope>PROTEIN SEQUENCE OF 44-70 AND 124-143</scope>
    <scope>AMIDATION AT ASN-70 AND ILE-143</scope>
    <scope>MASS SPECTROMETRY</scope>
    <source>
        <tissue>Skin</tissue>
    </source>
</reference>
<reference key="2">
    <citation type="journal article" date="2002" name="Peptides">
        <title>Antimicrobial peptides from skin secretions of Chinese red belly toad Bombina maxima.</title>
        <authorList>
            <person name="Lai R."/>
            <person name="Zheng Y.-T."/>
            <person name="Shen J.-H."/>
            <person name="Liu G.-J."/>
            <person name="Liu H."/>
            <person name="Lee W.-H."/>
            <person name="Tang S.-Z."/>
            <person name="Zhang Y."/>
        </authorList>
    </citation>
    <scope>PROTEIN SEQUENCE OF 44-70</scope>
    <scope>AMIDATION AT ASN-70</scope>
    <scope>MASS SPECTROMETRY</scope>
    <scope>FUNCTION OF MAXIMIN-2</scope>
</reference>
<sequence>MNFKYIVAVSFLIASAYARSEENEIQSLSQRDVLEEESLREMRGIGTKILGGVKTALKGALKELASTYVNGKRTAEEHEVMKRLETVMRDLDSLDYPEEASERETRGFNQEEIANLFTKKEKRILGPVLGLVSNALGGLLKNIG</sequence>
<organism>
    <name type="scientific">Bombina maxima</name>
    <name type="common">Giant fire-bellied toad</name>
    <name type="synonym">Chinese red belly toad</name>
    <dbReference type="NCBI Taxonomy" id="161274"/>
    <lineage>
        <taxon>Eukaryota</taxon>
        <taxon>Metazoa</taxon>
        <taxon>Chordata</taxon>
        <taxon>Craniata</taxon>
        <taxon>Vertebrata</taxon>
        <taxon>Euteleostomi</taxon>
        <taxon>Amphibia</taxon>
        <taxon>Batrachia</taxon>
        <taxon>Anura</taxon>
        <taxon>Bombinatoridae</taxon>
        <taxon>Bombina</taxon>
    </lineage>
</organism>
<proteinExistence type="evidence at protein level"/>
<accession>Q58T49</accession>
<feature type="signal peptide" evidence="2">
    <location>
        <begin position="1"/>
        <end position="18"/>
    </location>
</feature>
<feature type="propeptide" id="PRO_0000003092" evidence="3">
    <location>
        <begin position="19"/>
        <end position="43"/>
    </location>
</feature>
<feature type="peptide" id="PRO_0000003093" description="Maximin-2">
    <location>
        <begin position="44"/>
        <end position="70"/>
    </location>
</feature>
<feature type="propeptide" id="PRO_0000003094" evidence="1">
    <location>
        <begin position="74"/>
        <end position="123"/>
    </location>
</feature>
<feature type="peptide" id="PRO_0000003095" description="Maximin-H8">
    <location>
        <begin position="124"/>
        <end position="143"/>
    </location>
</feature>
<feature type="modified residue" description="Asparagine amide" evidence="3 4">
    <location>
        <position position="70"/>
    </location>
</feature>
<feature type="modified residue" description="Isoleucine amide" evidence="4">
    <location>
        <position position="143"/>
    </location>
</feature>
<comment type="function">
    <text evidence="3">Maximin-2 shows antibacterial activity against both Gram-positive and Gram-negative bacteria. It also shows antimicrobial activity against the fungus C.albicans, but not against A.flavus nor P.uticale. It has little hemolytic activity.</text>
</comment>
<comment type="function">
    <text evidence="1">Maximin-H8 shows antimicrobial activity against bacteria and against the fungus C.albicans. Shows strong hemolytic activity (By similarity).</text>
</comment>
<comment type="subcellular location">
    <subcellularLocation>
        <location>Secreted</location>
    </subcellularLocation>
</comment>
<comment type="tissue specificity">
    <text>Expressed by the skin glands.</text>
</comment>
<comment type="mass spectrometry">
    <molecule>Maximin-2</molecule>
</comment>
<comment type="similarity">
    <text evidence="5">Belongs to the bombinin family.</text>
</comment>
<evidence type="ECO:0000250" key="1"/>
<evidence type="ECO:0000255" key="2"/>
<evidence type="ECO:0000269" key="3">
    <source>
    </source>
</evidence>
<evidence type="ECO:0000269" key="4">
    <source>
    </source>
</evidence>
<evidence type="ECO:0000305" key="5"/>
<dbReference type="EMBL" id="AY849011">
    <property type="protein sequence ID" value="AAX50232.1"/>
    <property type="molecule type" value="mRNA"/>
</dbReference>
<dbReference type="SMR" id="Q58T49"/>
<dbReference type="GO" id="GO:0005576">
    <property type="term" value="C:extracellular region"/>
    <property type="evidence" value="ECO:0007669"/>
    <property type="project" value="UniProtKB-SubCell"/>
</dbReference>
<dbReference type="GO" id="GO:0042742">
    <property type="term" value="P:defense response to bacterium"/>
    <property type="evidence" value="ECO:0007669"/>
    <property type="project" value="UniProtKB-KW"/>
</dbReference>
<dbReference type="GO" id="GO:0050832">
    <property type="term" value="P:defense response to fungus"/>
    <property type="evidence" value="ECO:0007669"/>
    <property type="project" value="UniProtKB-KW"/>
</dbReference>
<dbReference type="GO" id="GO:0031640">
    <property type="term" value="P:killing of cells of another organism"/>
    <property type="evidence" value="ECO:0007669"/>
    <property type="project" value="UniProtKB-KW"/>
</dbReference>
<dbReference type="InterPro" id="IPR007962">
    <property type="entry name" value="Bombinin"/>
</dbReference>
<dbReference type="Pfam" id="PF05298">
    <property type="entry name" value="Bombinin"/>
    <property type="match status" value="1"/>
</dbReference>
<keyword id="KW-0027">Amidation</keyword>
<keyword id="KW-0878">Amphibian defense peptide</keyword>
<keyword id="KW-0044">Antibiotic</keyword>
<keyword id="KW-0929">Antimicrobial</keyword>
<keyword id="KW-0165">Cleavage on pair of basic residues</keyword>
<keyword id="KW-0204">Cytolysis</keyword>
<keyword id="KW-0903">Direct protein sequencing</keyword>
<keyword id="KW-0295">Fungicide</keyword>
<keyword id="KW-0354">Hemolysis</keyword>
<keyword id="KW-0964">Secreted</keyword>
<keyword id="KW-0732">Signal</keyword>
<name>M2H81_BOMMX</name>
<protein>
    <recommendedName>
        <fullName>Maximins 2/H8 type 1</fullName>
    </recommendedName>
    <component>
        <recommendedName>
            <fullName>Maximin-2</fullName>
        </recommendedName>
    </component>
    <component>
        <recommendedName>
            <fullName>Maximin-H8</fullName>
        </recommendedName>
    </component>
</protein>